<gene>
    <name evidence="12 15" type="primary">SYNRG</name>
    <name type="synonym">AP1GBP1</name>
    <name type="synonym">SYNG</name>
</gene>
<protein>
    <recommendedName>
        <fullName>Synergin gamma</fullName>
    </recommendedName>
    <alternativeName>
        <fullName>AP1 subunit gamma-binding protein 1</fullName>
    </alternativeName>
    <alternativeName>
        <fullName>Gamma-synergin</fullName>
    </alternativeName>
</protein>
<sequence>MALRPGAGSGGGGAAGAGAGSAGGGGFMFPVAGGIRPPQAGLMPMQQQGFPMVSVMQPNMQGIMGMNYSSQMSQGPIAMQAGIPMGPMPAAGMPYLGQAPFLGMRPPGPQYTPDMQKQFAEEQQKRFEQQQKLLEEERKRRQFEEQKQKLRLLSSVKPKTGEKSRDDALEAIKGNLDGFSRDAKMHPTPASHPKKPGPSLEEKFLVSCDISTSGQEQIKLNTSEVGHKALGPGSSKKYPSLMASNGVAVDGCVSGTTTAEAENTSDQNLSIEESGVGVFPSQDPAQPRMPPWIYNESLVPDAYKKILETTMTPTGIDTAKLYPILMSSGLPRETLGQIWALANRTTPGKLTKEELYTVLAMIAVTQRGVPAMSPDALNQFPAAPIPTLSGFSMTLPTPVSQPTVIPSGPAGSMPLSLGQPVMGINLVGPVGGAAAQASSGFIPTYPANQVVKPEEDDFQDFQDASKSGSLDDSFSDFQELPASSKTSNSQHGNSAPSLLMPLPGTKALPSMDKYAVFKGIAADKSSENTVPPGDPGDKYSAFRELEQTAENKPLGESFAEFRSAGTDDGFTDFKTADSVSPLEPPTKDKTFPPSFPSGTIQQKQQTQVKNPLNLADLDMFSSVNCSSEKPLSFSAVFSTSKSVSTPQSTGSAATMTALAATKTSSLADDFGEFSLFGEYSGLAPVGEQDDFADFMAFSNSSISSEQKPDDKYDALKEEASPVPLTSNVGSTVKGGQNSTAASTKYDVFRQLSLEGSGLGVEDLKDNTPSGKSDDDFADFHSSKFSSINSDKSLGEKAVAFRHTKEDSASVKSLDLPSIGGSSVGKEDSEDALSVQFDMKLADVGGDLKHVMSDSSLDLPTVSGQHPPAADIEDLKYAAFGSYSSNFAVSTLTSYDWSDRDDATQGRKLSPFVLSAGSGSPSATSILQKKETSFGSSENITMTSLSKVTTFVSEDALPETTFPALASFKDTIPQTSEQKEYENRDYKDFTKQDLPTAERSQEATCPSPASSGASQETPNECSDDFGEFQSEKPKISKFDFLVATSQSKMKSSEEMIKSELATFDLSVQGSHKRSLSLGDKEISRSSPSPALEQPFRDRSNTLNEKPALPVIRDKYKDLTGEVEENERYAYEWQRCLGSALNVIKKANDTLNGISSSSVCTEVIQSAQGMEYLLGVVEVYRVTKRVELGIKATAVCSEKLQQLLKDIDKVWNNLIGFMSLATLTPDENSLDFSSCMLRPGIKNAQELACGVCLLNVDSRSRKEEKPAEEHPKKAFNSETDSFKLAYGGHQYHASCANFWINCVEPKPPGLVLPDLL</sequence>
<keyword id="KW-0002">3D-structure</keyword>
<keyword id="KW-0007">Acetylation</keyword>
<keyword id="KW-0025">Alternative splicing</keyword>
<keyword id="KW-0175">Coiled coil</keyword>
<keyword id="KW-0963">Cytoplasm</keyword>
<keyword id="KW-0968">Cytoplasmic vesicle</keyword>
<keyword id="KW-0254">Endocytosis</keyword>
<keyword id="KW-0333">Golgi apparatus</keyword>
<keyword id="KW-0472">Membrane</keyword>
<keyword id="KW-0597">Phosphoprotein</keyword>
<keyword id="KW-0653">Protein transport</keyword>
<keyword id="KW-1267">Proteomics identification</keyword>
<keyword id="KW-1185">Reference proteome</keyword>
<keyword id="KW-0677">Repeat</keyword>
<keyword id="KW-0813">Transport</keyword>
<evidence type="ECO:0000250" key="1">
    <source>
        <dbReference type="UniProtKB" id="Q9JKC9"/>
    </source>
</evidence>
<evidence type="ECO:0000255" key="2"/>
<evidence type="ECO:0000255" key="3">
    <source>
        <dbReference type="PROSITE-ProRule" id="PRU00077"/>
    </source>
</evidence>
<evidence type="ECO:0000256" key="4">
    <source>
        <dbReference type="SAM" id="MobiDB-lite"/>
    </source>
</evidence>
<evidence type="ECO:0000269" key="5">
    <source>
    </source>
</evidence>
<evidence type="ECO:0000269" key="6">
    <source>
    </source>
</evidence>
<evidence type="ECO:0000269" key="7">
    <source>
    </source>
</evidence>
<evidence type="ECO:0000269" key="8">
    <source>
    </source>
</evidence>
<evidence type="ECO:0000269" key="9">
    <source>
    </source>
</evidence>
<evidence type="ECO:0000269" key="10">
    <source>
    </source>
</evidence>
<evidence type="ECO:0000303" key="11">
    <source>
    </source>
</evidence>
<evidence type="ECO:0000303" key="12">
    <source>
    </source>
</evidence>
<evidence type="ECO:0000305" key="13"/>
<evidence type="ECO:0000305" key="14">
    <source>
    </source>
</evidence>
<evidence type="ECO:0000312" key="15">
    <source>
        <dbReference type="HGNC" id="HGNC:557"/>
    </source>
</evidence>
<evidence type="ECO:0007744" key="16">
    <source>
    </source>
</evidence>
<evidence type="ECO:0007744" key="17">
    <source>
    </source>
</evidence>
<evidence type="ECO:0007744" key="18">
    <source>
    </source>
</evidence>
<evidence type="ECO:0007744" key="19">
    <source>
    </source>
</evidence>
<evidence type="ECO:0007744" key="20">
    <source>
    </source>
</evidence>
<evidence type="ECO:0007744" key="21">
    <source>
    </source>
</evidence>
<evidence type="ECO:0007744" key="22">
    <source>
    </source>
</evidence>
<evidence type="ECO:0007829" key="23">
    <source>
        <dbReference type="PDB" id="2MX7"/>
    </source>
</evidence>
<organism>
    <name type="scientific">Homo sapiens</name>
    <name type="common">Human</name>
    <dbReference type="NCBI Taxonomy" id="9606"/>
    <lineage>
        <taxon>Eukaryota</taxon>
        <taxon>Metazoa</taxon>
        <taxon>Chordata</taxon>
        <taxon>Craniata</taxon>
        <taxon>Vertebrata</taxon>
        <taxon>Euteleostomi</taxon>
        <taxon>Mammalia</taxon>
        <taxon>Eutheria</taxon>
        <taxon>Euarchontoglires</taxon>
        <taxon>Primates</taxon>
        <taxon>Haplorrhini</taxon>
        <taxon>Catarrhini</taxon>
        <taxon>Hominidae</taxon>
        <taxon>Homo</taxon>
    </lineage>
</organism>
<dbReference type="EMBL" id="AF169548">
    <property type="protein sequence ID" value="AAD49732.1"/>
    <property type="molecule type" value="mRNA"/>
</dbReference>
<dbReference type="EMBL" id="AC004099">
    <property type="status" value="NOT_ANNOTATED_CDS"/>
    <property type="molecule type" value="Genomic_DNA"/>
</dbReference>
<dbReference type="EMBL" id="AC091199">
    <property type="status" value="NOT_ANNOTATED_CDS"/>
    <property type="molecule type" value="Genomic_DNA"/>
</dbReference>
<dbReference type="EMBL" id="BC090930">
    <property type="protein sequence ID" value="AAH90930.1"/>
    <property type="molecule type" value="mRNA"/>
</dbReference>
<dbReference type="EMBL" id="BC117313">
    <property type="protein sequence ID" value="AAI17314.1"/>
    <property type="molecule type" value="mRNA"/>
</dbReference>
<dbReference type="EMBL" id="BC143476">
    <property type="protein sequence ID" value="AAI43477.1"/>
    <property type="molecule type" value="mRNA"/>
</dbReference>
<dbReference type="EMBL" id="BC143478">
    <property type="protein sequence ID" value="AAI43479.1"/>
    <property type="molecule type" value="mRNA"/>
</dbReference>
<dbReference type="EMBL" id="AK126988">
    <property type="status" value="NOT_ANNOTATED_CDS"/>
    <property type="molecule type" value="mRNA"/>
</dbReference>
<dbReference type="CCDS" id="CCDS11321.1">
    <molecule id="Q9UMZ2-1"/>
</dbReference>
<dbReference type="CCDS" id="CCDS11322.2">
    <molecule id="Q9UMZ2-4"/>
</dbReference>
<dbReference type="CCDS" id="CCDS54113.1">
    <molecule id="Q9UMZ2-6"/>
</dbReference>
<dbReference type="CCDS" id="CCDS54114.1">
    <molecule id="Q9UMZ2-7"/>
</dbReference>
<dbReference type="CCDS" id="CCDS59284.1">
    <molecule id="Q9UMZ2-8"/>
</dbReference>
<dbReference type="CCDS" id="CCDS59285.1">
    <molecule id="Q9UMZ2-9"/>
</dbReference>
<dbReference type="RefSeq" id="NP_001157016.1">
    <molecule id="Q9UMZ2-3"/>
    <property type="nucleotide sequence ID" value="NM_001163544.3"/>
</dbReference>
<dbReference type="RefSeq" id="NP_001157017.1">
    <molecule id="Q9UMZ2-8"/>
    <property type="nucleotide sequence ID" value="NM_001163545.3"/>
</dbReference>
<dbReference type="RefSeq" id="NP_001157018.1">
    <molecule id="Q9UMZ2-9"/>
    <property type="nucleotide sequence ID" value="NM_001163546.3"/>
</dbReference>
<dbReference type="RefSeq" id="NP_001157019.1">
    <molecule id="Q9UMZ2-6"/>
    <property type="nucleotide sequence ID" value="NM_001163547.3"/>
</dbReference>
<dbReference type="RefSeq" id="NP_009178.3">
    <molecule id="Q9UMZ2-1"/>
    <property type="nucleotide sequence ID" value="NM_007247.5"/>
</dbReference>
<dbReference type="RefSeq" id="NP_542117.3">
    <molecule id="Q9UMZ2-4"/>
    <property type="nucleotide sequence ID" value="NM_080550.4"/>
</dbReference>
<dbReference type="RefSeq" id="NP_942583.1">
    <molecule id="Q9UMZ2-7"/>
    <property type="nucleotide sequence ID" value="NM_198882.3"/>
</dbReference>
<dbReference type="RefSeq" id="XP_016879582.1">
    <molecule id="Q9UMZ2-5"/>
    <property type="nucleotide sequence ID" value="XM_017024093.3"/>
</dbReference>
<dbReference type="RefSeq" id="XP_054185231.1">
    <molecule id="Q9UMZ2-5"/>
    <property type="nucleotide sequence ID" value="XM_054329256.1"/>
</dbReference>
<dbReference type="PDB" id="2MX7">
    <property type="method" value="NMR"/>
    <property type="chains" value="A=279-388"/>
</dbReference>
<dbReference type="PDBsum" id="2MX7"/>
<dbReference type="SMR" id="Q9UMZ2"/>
<dbReference type="BioGRID" id="116432">
    <property type="interactions" value="72"/>
</dbReference>
<dbReference type="ELM" id="Q9UMZ2"/>
<dbReference type="FunCoup" id="Q9UMZ2">
    <property type="interactions" value="1434"/>
</dbReference>
<dbReference type="IntAct" id="Q9UMZ2">
    <property type="interactions" value="36"/>
</dbReference>
<dbReference type="MINT" id="Q9UMZ2"/>
<dbReference type="STRING" id="9606.ENSP00000483453"/>
<dbReference type="GlyCosmos" id="Q9UMZ2">
    <property type="glycosylation" value="1 site, 1 glycan"/>
</dbReference>
<dbReference type="GlyGen" id="Q9UMZ2">
    <property type="glycosylation" value="1 site, 1 O-linked glycan (1 site)"/>
</dbReference>
<dbReference type="iPTMnet" id="Q9UMZ2"/>
<dbReference type="MetOSite" id="Q9UMZ2"/>
<dbReference type="PhosphoSitePlus" id="Q9UMZ2"/>
<dbReference type="BioMuta" id="SYNRG"/>
<dbReference type="DMDM" id="143811464"/>
<dbReference type="jPOST" id="Q9UMZ2"/>
<dbReference type="MassIVE" id="Q9UMZ2"/>
<dbReference type="PaxDb" id="9606-ENSP00000483453"/>
<dbReference type="PeptideAtlas" id="Q9UMZ2"/>
<dbReference type="ProteomicsDB" id="2266"/>
<dbReference type="ProteomicsDB" id="85232">
    <molecule id="Q9UMZ2-1"/>
</dbReference>
<dbReference type="ProteomicsDB" id="85233">
    <molecule id="Q9UMZ2-3"/>
</dbReference>
<dbReference type="ProteomicsDB" id="85234">
    <molecule id="Q9UMZ2-4"/>
</dbReference>
<dbReference type="ProteomicsDB" id="85235">
    <molecule id="Q9UMZ2-5"/>
</dbReference>
<dbReference type="ProteomicsDB" id="85236">
    <molecule id="Q9UMZ2-6"/>
</dbReference>
<dbReference type="Pumba" id="Q9UMZ2"/>
<dbReference type="Antibodypedia" id="74878">
    <property type="antibodies" value="35 antibodies from 11 providers"/>
</dbReference>
<dbReference type="DNASU" id="11276"/>
<dbReference type="Ensembl" id="ENST00000610513.2">
    <molecule id="Q9UMZ2-6"/>
    <property type="protein sequence ID" value="ENSP00000478707.1"/>
    <property type="gene ID" value="ENSG00000274047.4"/>
</dbReference>
<dbReference type="Ensembl" id="ENST00000612223.5">
    <molecule id="Q9UMZ2-1"/>
    <property type="protein sequence ID" value="ENSP00000483453.1"/>
    <property type="gene ID" value="ENSG00000275066.5"/>
</dbReference>
<dbReference type="Ensembl" id="ENST00000613407.4">
    <molecule id="Q9UMZ2-7"/>
    <property type="protein sequence ID" value="ENSP00000483152.1"/>
    <property type="gene ID" value="ENSG00000274047.4"/>
</dbReference>
<dbReference type="Ensembl" id="ENST00000614941.4">
    <molecule id="Q9UMZ2-6"/>
    <property type="protein sequence ID" value="ENSP00000481151.1"/>
    <property type="gene ID" value="ENSG00000275066.5"/>
</dbReference>
<dbReference type="Ensembl" id="ENST00000616179.4">
    <molecule id="Q9UMZ2-9"/>
    <property type="protein sequence ID" value="ENSP00000482962.1"/>
    <property type="gene ID" value="ENSG00000275066.5"/>
</dbReference>
<dbReference type="Ensembl" id="ENST00000618176.4">
    <molecule id="Q9UMZ2-4"/>
    <property type="protein sequence ID" value="ENSP00000482597.1"/>
    <property type="gene ID" value="ENSG00000274047.4"/>
</dbReference>
<dbReference type="Ensembl" id="ENST00000618402.4">
    <molecule id="Q9UMZ2-1"/>
    <property type="protein sequence ID" value="ENSP00000480288.1"/>
    <property type="gene ID" value="ENSG00000274047.4"/>
</dbReference>
<dbReference type="Ensembl" id="ENST00000619541.4">
    <molecule id="Q9UMZ2-8"/>
    <property type="protein sequence ID" value="ENSP00000477885.1"/>
    <property type="gene ID" value="ENSG00000275066.5"/>
</dbReference>
<dbReference type="Ensembl" id="ENST00000621136.4">
    <molecule id="Q9UMZ2-4"/>
    <property type="protein sequence ID" value="ENSP00000484529.1"/>
    <property type="gene ID" value="ENSG00000275066.5"/>
</dbReference>
<dbReference type="Ensembl" id="ENST00000622045.4">
    <molecule id="Q9UMZ2-7"/>
    <property type="protein sequence ID" value="ENSP00000483063.1"/>
    <property type="gene ID" value="ENSG00000275066.5"/>
</dbReference>
<dbReference type="Ensembl" id="ENST00000632841.1">
    <molecule id="Q9UMZ2-9"/>
    <property type="protein sequence ID" value="ENSP00000487672.1"/>
    <property type="gene ID" value="ENSG00000274047.4"/>
</dbReference>
<dbReference type="Ensembl" id="ENST00000633429.1">
    <molecule id="Q9UMZ2-8"/>
    <property type="protein sequence ID" value="ENSP00000488473.1"/>
    <property type="gene ID" value="ENSG00000274047.4"/>
</dbReference>
<dbReference type="GeneID" id="11276"/>
<dbReference type="KEGG" id="hsa:11276"/>
<dbReference type="MANE-Select" id="ENST00000612223.5">
    <property type="protein sequence ID" value="ENSP00000483453.1"/>
    <property type="RefSeq nucleotide sequence ID" value="NM_007247.6"/>
    <property type="RefSeq protein sequence ID" value="NP_009178.3"/>
</dbReference>
<dbReference type="UCSC" id="uc002hoa.4">
    <molecule id="Q9UMZ2-1"/>
    <property type="organism name" value="human"/>
</dbReference>
<dbReference type="AGR" id="HGNC:557"/>
<dbReference type="CTD" id="11276"/>
<dbReference type="DisGeNET" id="11276"/>
<dbReference type="GeneCards" id="SYNRG"/>
<dbReference type="HGNC" id="HGNC:557">
    <property type="gene designation" value="SYNRG"/>
</dbReference>
<dbReference type="HPA" id="ENSG00000275066">
    <property type="expression patterns" value="Low tissue specificity"/>
</dbReference>
<dbReference type="MIM" id="607291">
    <property type="type" value="gene"/>
</dbReference>
<dbReference type="neXtProt" id="NX_Q9UMZ2"/>
<dbReference type="OpenTargets" id="ENSG00000275066"/>
<dbReference type="PharmGKB" id="PA24847"/>
<dbReference type="VEuPathDB" id="HostDB:ENSG00000275066"/>
<dbReference type="eggNOG" id="KOG0998">
    <property type="taxonomic scope" value="Eukaryota"/>
</dbReference>
<dbReference type="GeneTree" id="ENSGT00390000010789"/>
<dbReference type="HOGENOM" id="CLU_263817_0_0_1"/>
<dbReference type="InParanoid" id="Q9UMZ2"/>
<dbReference type="OMA" id="GPIAMQX"/>
<dbReference type="OrthoDB" id="524326at2759"/>
<dbReference type="PAN-GO" id="Q9UMZ2">
    <property type="GO annotations" value="1 GO annotation based on evolutionary models"/>
</dbReference>
<dbReference type="PhylomeDB" id="Q9UMZ2"/>
<dbReference type="TreeFam" id="TF316700"/>
<dbReference type="PathwayCommons" id="Q9UMZ2"/>
<dbReference type="SignaLink" id="Q9UMZ2"/>
<dbReference type="BioGRID-ORCS" id="11276">
    <property type="hits" value="16 hits in 1150 CRISPR screens"/>
</dbReference>
<dbReference type="ChiTaRS" id="SYNRG">
    <property type="organism name" value="human"/>
</dbReference>
<dbReference type="EvolutionaryTrace" id="Q9UMZ2"/>
<dbReference type="GeneWiki" id="Synergin_gamma"/>
<dbReference type="GenomeRNAi" id="11276"/>
<dbReference type="Pharos" id="Q9UMZ2">
    <property type="development level" value="Tdark"/>
</dbReference>
<dbReference type="PRO" id="PR:Q9UMZ2"/>
<dbReference type="Proteomes" id="UP000005640">
    <property type="component" value="Chromosome 17"/>
</dbReference>
<dbReference type="RNAct" id="Q9UMZ2">
    <property type="molecule type" value="protein"/>
</dbReference>
<dbReference type="Bgee" id="ENSG00000275066">
    <property type="expression patterns" value="Expressed in bone marrow cell and 110 other cell types or tissues"/>
</dbReference>
<dbReference type="ExpressionAtlas" id="Q9UMZ2">
    <property type="expression patterns" value="baseline and differential"/>
</dbReference>
<dbReference type="GO" id="GO:0030121">
    <property type="term" value="C:AP-1 adaptor complex"/>
    <property type="evidence" value="ECO:0000304"/>
    <property type="project" value="ProtInc"/>
</dbReference>
<dbReference type="GO" id="GO:0030130">
    <property type="term" value="C:clathrin coat of trans-Golgi network vesicle"/>
    <property type="evidence" value="ECO:0000318"/>
    <property type="project" value="GO_Central"/>
</dbReference>
<dbReference type="GO" id="GO:0005737">
    <property type="term" value="C:cytoplasm"/>
    <property type="evidence" value="ECO:0000304"/>
    <property type="project" value="ProtInc"/>
</dbReference>
<dbReference type="GO" id="GO:0005794">
    <property type="term" value="C:Golgi apparatus"/>
    <property type="evidence" value="ECO:0000304"/>
    <property type="project" value="ProtInc"/>
</dbReference>
<dbReference type="GO" id="GO:0048471">
    <property type="term" value="C:perinuclear region of cytoplasm"/>
    <property type="evidence" value="ECO:0007669"/>
    <property type="project" value="UniProtKB-SubCell"/>
</dbReference>
<dbReference type="GO" id="GO:0006897">
    <property type="term" value="P:endocytosis"/>
    <property type="evidence" value="ECO:0007669"/>
    <property type="project" value="UniProtKB-KW"/>
</dbReference>
<dbReference type="GO" id="GO:0006886">
    <property type="term" value="P:intracellular protein transport"/>
    <property type="evidence" value="ECO:0000304"/>
    <property type="project" value="ProtInc"/>
</dbReference>
<dbReference type="CDD" id="cd00052">
    <property type="entry name" value="EH"/>
    <property type="match status" value="1"/>
</dbReference>
<dbReference type="FunFam" id="1.10.238.10:FF:000075">
    <property type="entry name" value="synergin gamma isoform X2"/>
    <property type="match status" value="1"/>
</dbReference>
<dbReference type="Gene3D" id="1.10.238.10">
    <property type="entry name" value="EF-hand"/>
    <property type="match status" value="1"/>
</dbReference>
<dbReference type="InterPro" id="IPR011992">
    <property type="entry name" value="EF-hand-dom_pair"/>
</dbReference>
<dbReference type="InterPro" id="IPR000261">
    <property type="entry name" value="EH_dom"/>
</dbReference>
<dbReference type="InterPro" id="IPR039656">
    <property type="entry name" value="SYNRG"/>
</dbReference>
<dbReference type="PANTHER" id="PTHR15463">
    <property type="entry name" value="AP1 GAMMA SUBUNIT BINDING PROTEIN 1"/>
    <property type="match status" value="1"/>
</dbReference>
<dbReference type="PANTHER" id="PTHR15463:SF2">
    <property type="entry name" value="SYNERGIN GAMMA"/>
    <property type="match status" value="1"/>
</dbReference>
<dbReference type="Pfam" id="PF12763">
    <property type="entry name" value="EH"/>
    <property type="match status" value="1"/>
</dbReference>
<dbReference type="SMART" id="SM00027">
    <property type="entry name" value="EH"/>
    <property type="match status" value="1"/>
</dbReference>
<dbReference type="SUPFAM" id="SSF47473">
    <property type="entry name" value="EF-hand"/>
    <property type="match status" value="1"/>
</dbReference>
<dbReference type="PROSITE" id="PS50031">
    <property type="entry name" value="EH"/>
    <property type="match status" value="1"/>
</dbReference>
<reference key="1">
    <citation type="journal article" date="1999" name="J. Cell Biol.">
        <title>Gamma-synergin: an EH domain-containing protein that interacts with gamma-adaptin.</title>
        <authorList>
            <person name="Page L.J."/>
            <person name="Sowerby P.J."/>
            <person name="Lui W.W.Y."/>
            <person name="Robinson M.S."/>
        </authorList>
    </citation>
    <scope>NUCLEOTIDE SEQUENCE [MRNA] (ISOFORM 1)</scope>
    <scope>INTERACTION WITH AP1G1</scope>
    <source>
        <tissue>Brain</tissue>
    </source>
</reference>
<reference key="2">
    <citation type="journal article" date="2006" name="Nature">
        <title>DNA sequence of human chromosome 17 and analysis of rearrangement in the human lineage.</title>
        <authorList>
            <person name="Zody M.C."/>
            <person name="Garber M."/>
            <person name="Adams D.J."/>
            <person name="Sharpe T."/>
            <person name="Harrow J."/>
            <person name="Lupski J.R."/>
            <person name="Nicholson C."/>
            <person name="Searle S.M."/>
            <person name="Wilming L."/>
            <person name="Young S.K."/>
            <person name="Abouelleil A."/>
            <person name="Allen N.R."/>
            <person name="Bi W."/>
            <person name="Bloom T."/>
            <person name="Borowsky M.L."/>
            <person name="Bugalter B.E."/>
            <person name="Butler J."/>
            <person name="Chang J.L."/>
            <person name="Chen C.-K."/>
            <person name="Cook A."/>
            <person name="Corum B."/>
            <person name="Cuomo C.A."/>
            <person name="de Jong P.J."/>
            <person name="DeCaprio D."/>
            <person name="Dewar K."/>
            <person name="FitzGerald M."/>
            <person name="Gilbert J."/>
            <person name="Gibson R."/>
            <person name="Gnerre S."/>
            <person name="Goldstein S."/>
            <person name="Grafham D.V."/>
            <person name="Grocock R."/>
            <person name="Hafez N."/>
            <person name="Hagopian D.S."/>
            <person name="Hart E."/>
            <person name="Norman C.H."/>
            <person name="Humphray S."/>
            <person name="Jaffe D.B."/>
            <person name="Jones M."/>
            <person name="Kamal M."/>
            <person name="Khodiyar V.K."/>
            <person name="LaButti K."/>
            <person name="Laird G."/>
            <person name="Lehoczky J."/>
            <person name="Liu X."/>
            <person name="Lokyitsang T."/>
            <person name="Loveland J."/>
            <person name="Lui A."/>
            <person name="Macdonald P."/>
            <person name="Major J.E."/>
            <person name="Matthews L."/>
            <person name="Mauceli E."/>
            <person name="McCarroll S.A."/>
            <person name="Mihalev A.H."/>
            <person name="Mudge J."/>
            <person name="Nguyen C."/>
            <person name="Nicol R."/>
            <person name="O'Leary S.B."/>
            <person name="Osoegawa K."/>
            <person name="Schwartz D.C."/>
            <person name="Shaw-Smith C."/>
            <person name="Stankiewicz P."/>
            <person name="Steward C."/>
            <person name="Swarbreck D."/>
            <person name="Venkataraman V."/>
            <person name="Whittaker C.A."/>
            <person name="Yang X."/>
            <person name="Zimmer A.R."/>
            <person name="Bradley A."/>
            <person name="Hubbard T."/>
            <person name="Birren B.W."/>
            <person name="Rogers J."/>
            <person name="Lander E.S."/>
            <person name="Nusbaum C."/>
        </authorList>
    </citation>
    <scope>NUCLEOTIDE SEQUENCE [LARGE SCALE GENOMIC DNA]</scope>
</reference>
<reference key="3">
    <citation type="journal article" date="2004" name="Genome Res.">
        <title>The status, quality, and expansion of the NIH full-length cDNA project: the Mammalian Gene Collection (MGC).</title>
        <authorList>
            <consortium name="The MGC Project Team"/>
        </authorList>
    </citation>
    <scope>NUCLEOTIDE SEQUENCE [LARGE SCALE MRNA] (ISOFORMS 2; 3; 5 AND 7)</scope>
    <source>
        <tissue>Brain</tissue>
        <tissue>Lymph</tissue>
    </source>
</reference>
<reference key="4">
    <citation type="journal article" date="2004" name="Nat. Genet.">
        <title>Complete sequencing and characterization of 21,243 full-length human cDNAs.</title>
        <authorList>
            <person name="Ota T."/>
            <person name="Suzuki Y."/>
            <person name="Nishikawa T."/>
            <person name="Otsuki T."/>
            <person name="Sugiyama T."/>
            <person name="Irie R."/>
            <person name="Wakamatsu A."/>
            <person name="Hayashi K."/>
            <person name="Sato H."/>
            <person name="Nagai K."/>
            <person name="Kimura K."/>
            <person name="Makita H."/>
            <person name="Sekine M."/>
            <person name="Obayashi M."/>
            <person name="Nishi T."/>
            <person name="Shibahara T."/>
            <person name="Tanaka T."/>
            <person name="Ishii S."/>
            <person name="Yamamoto J."/>
            <person name="Saito K."/>
            <person name="Kawai Y."/>
            <person name="Isono Y."/>
            <person name="Nakamura Y."/>
            <person name="Nagahari K."/>
            <person name="Murakami K."/>
            <person name="Yasuda T."/>
            <person name="Iwayanagi T."/>
            <person name="Wagatsuma M."/>
            <person name="Shiratori A."/>
            <person name="Sudo H."/>
            <person name="Hosoiri T."/>
            <person name="Kaku Y."/>
            <person name="Kodaira H."/>
            <person name="Kondo H."/>
            <person name="Sugawara M."/>
            <person name="Takahashi M."/>
            <person name="Kanda K."/>
            <person name="Yokoi T."/>
            <person name="Furuya T."/>
            <person name="Kikkawa E."/>
            <person name="Omura Y."/>
            <person name="Abe K."/>
            <person name="Kamihara K."/>
            <person name="Katsuta N."/>
            <person name="Sato K."/>
            <person name="Tanikawa M."/>
            <person name="Yamazaki M."/>
            <person name="Ninomiya K."/>
            <person name="Ishibashi T."/>
            <person name="Yamashita H."/>
            <person name="Murakawa K."/>
            <person name="Fujimori K."/>
            <person name="Tanai H."/>
            <person name="Kimata M."/>
            <person name="Watanabe M."/>
            <person name="Hiraoka S."/>
            <person name="Chiba Y."/>
            <person name="Ishida S."/>
            <person name="Ono Y."/>
            <person name="Takiguchi S."/>
            <person name="Watanabe S."/>
            <person name="Yosida M."/>
            <person name="Hotuta T."/>
            <person name="Kusano J."/>
            <person name="Kanehori K."/>
            <person name="Takahashi-Fujii A."/>
            <person name="Hara H."/>
            <person name="Tanase T.-O."/>
            <person name="Nomura Y."/>
            <person name="Togiya S."/>
            <person name="Komai F."/>
            <person name="Hara R."/>
            <person name="Takeuchi K."/>
            <person name="Arita M."/>
            <person name="Imose N."/>
            <person name="Musashino K."/>
            <person name="Yuuki H."/>
            <person name="Oshima A."/>
            <person name="Sasaki N."/>
            <person name="Aotsuka S."/>
            <person name="Yoshikawa Y."/>
            <person name="Matsunawa H."/>
            <person name="Ichihara T."/>
            <person name="Shiohata N."/>
            <person name="Sano S."/>
            <person name="Moriya S."/>
            <person name="Momiyama H."/>
            <person name="Satoh N."/>
            <person name="Takami S."/>
            <person name="Terashima Y."/>
            <person name="Suzuki O."/>
            <person name="Nakagawa S."/>
            <person name="Senoh A."/>
            <person name="Mizoguchi H."/>
            <person name="Goto Y."/>
            <person name="Shimizu F."/>
            <person name="Wakebe H."/>
            <person name="Hishigaki H."/>
            <person name="Watanabe T."/>
            <person name="Sugiyama A."/>
            <person name="Takemoto M."/>
            <person name="Kawakami B."/>
            <person name="Yamazaki M."/>
            <person name="Watanabe K."/>
            <person name="Kumagai A."/>
            <person name="Itakura S."/>
            <person name="Fukuzumi Y."/>
            <person name="Fujimori Y."/>
            <person name="Komiyama M."/>
            <person name="Tashiro H."/>
            <person name="Tanigami A."/>
            <person name="Fujiwara T."/>
            <person name="Ono T."/>
            <person name="Yamada K."/>
            <person name="Fujii Y."/>
            <person name="Ozaki K."/>
            <person name="Hirao M."/>
            <person name="Ohmori Y."/>
            <person name="Kawabata A."/>
            <person name="Hikiji T."/>
            <person name="Kobatake N."/>
            <person name="Inagaki H."/>
            <person name="Ikema Y."/>
            <person name="Okamoto S."/>
            <person name="Okitani R."/>
            <person name="Kawakami T."/>
            <person name="Noguchi S."/>
            <person name="Itoh T."/>
            <person name="Shigeta K."/>
            <person name="Senba T."/>
            <person name="Matsumura K."/>
            <person name="Nakajima Y."/>
            <person name="Mizuno T."/>
            <person name="Morinaga M."/>
            <person name="Sasaki M."/>
            <person name="Togashi T."/>
            <person name="Oyama M."/>
            <person name="Hata H."/>
            <person name="Watanabe M."/>
            <person name="Komatsu T."/>
            <person name="Mizushima-Sugano J."/>
            <person name="Satoh T."/>
            <person name="Shirai Y."/>
            <person name="Takahashi Y."/>
            <person name="Nakagawa K."/>
            <person name="Okumura K."/>
            <person name="Nagase T."/>
            <person name="Nomura N."/>
            <person name="Kikuchi H."/>
            <person name="Masuho Y."/>
            <person name="Yamashita R."/>
            <person name="Nakai K."/>
            <person name="Yada T."/>
            <person name="Nakamura Y."/>
            <person name="Ohara O."/>
            <person name="Isogai T."/>
            <person name="Sugano S."/>
        </authorList>
    </citation>
    <scope>NUCLEOTIDE SEQUENCE [LARGE SCALE MRNA] OF 27-493 (ISOFORM 1)</scope>
    <source>
        <tissue>Brain</tissue>
    </source>
</reference>
<reference key="5">
    <citation type="journal article" date="2000" name="Biochem. Biophys. Res. Commun.">
        <title>Adaptor gamma ear homology domain conserved in gamma-adaptin and GGA proteins that interact with gamma-synergin.</title>
        <authorList>
            <person name="Takatsu H."/>
            <person name="Yoshino K."/>
            <person name="Nakayama K."/>
        </authorList>
    </citation>
    <scope>INTERACTION WITH GGA1; GGA2; GGA3; AP1G1 AND AP1G2</scope>
</reference>
<reference key="6">
    <citation type="journal article" date="2003" name="J. Cell Biol.">
        <title>EpsinR: an AP1/clathrin interacting protein involved in vesicle trafficking.</title>
        <authorList>
            <person name="Mills I.G."/>
            <person name="Praefcke G.J.K."/>
            <person name="Vallis Y."/>
            <person name="Peter B.J."/>
            <person name="Olesen L.E."/>
            <person name="Gallop J.L."/>
            <person name="Butler P.J.G."/>
            <person name="Evans P.R."/>
            <person name="McMahon H.T."/>
        </authorList>
    </citation>
    <scope>FUNCTION</scope>
    <scope>DOMAIN</scope>
    <scope>INTERACTION WITH AP1G1</scope>
</reference>
<reference key="7">
    <citation type="journal article" date="2004" name="J. Biol. Chem.">
        <title>Definition of the consensus motif recognized by gamma-adaptin ear domains.</title>
        <authorList>
            <person name="Mattera R."/>
            <person name="Ritter B."/>
            <person name="Sidhu S.S."/>
            <person name="McPherson P.S."/>
            <person name="Bonifacino J.S."/>
        </authorList>
    </citation>
    <scope>INTERACTION WITH GGA1; AP1G1 AND AP1G2</scope>
</reference>
<reference key="8">
    <citation type="journal article" date="2005" name="Mol. Biol. Cell">
        <title>The aftiphilin/p200/gamma-synergin complex.</title>
        <authorList>
            <person name="Hirst J."/>
            <person name="Borner G.H."/>
            <person name="Harbour M."/>
            <person name="Robinson M.S."/>
        </authorList>
    </citation>
    <scope>FUNCTION</scope>
    <scope>SUBUNIT</scope>
    <scope>IDENTIFICATION IN THE AFTIPHILIN-P200-GAMMA-SYNERGIN COMPLEX</scope>
    <scope>INTERACTION WITH AFTPH; HEATR5B AND GGA1</scope>
    <scope>SUBCELLULAR LOCATION</scope>
</reference>
<reference key="9">
    <citation type="journal article" date="2008" name="J. Proteome Res.">
        <title>Phosphoproteome of resting human platelets.</title>
        <authorList>
            <person name="Zahedi R.P."/>
            <person name="Lewandrowski U."/>
            <person name="Wiesner J."/>
            <person name="Wortelkamp S."/>
            <person name="Moebius J."/>
            <person name="Schuetz C."/>
            <person name="Walter U."/>
            <person name="Gambaryan S."/>
            <person name="Sickmann A."/>
        </authorList>
    </citation>
    <scope>IDENTIFICATION BY MASS SPECTROMETRY [LARGE SCALE ANALYSIS]</scope>
    <source>
        <tissue>Platelet</tissue>
    </source>
</reference>
<reference key="10">
    <citation type="journal article" date="2008" name="Mol. Cell">
        <title>Kinase-selective enrichment enables quantitative phosphoproteomics of the kinome across the cell cycle.</title>
        <authorList>
            <person name="Daub H."/>
            <person name="Olsen J.V."/>
            <person name="Bairlein M."/>
            <person name="Gnad F."/>
            <person name="Oppermann F.S."/>
            <person name="Korner R."/>
            <person name="Greff Z."/>
            <person name="Keri G."/>
            <person name="Stemmann O."/>
            <person name="Mann M."/>
        </authorList>
    </citation>
    <scope>PHOSPHORYLATION [LARGE SCALE ANALYSIS] AT SER-752</scope>
    <scope>IDENTIFICATION BY MASS SPECTROMETRY [LARGE SCALE ANALYSIS]</scope>
    <source>
        <tissue>Cervix carcinoma</tissue>
    </source>
</reference>
<reference key="11">
    <citation type="journal article" date="2008" name="Proc. Natl. Acad. Sci. U.S.A.">
        <title>A quantitative atlas of mitotic phosphorylation.</title>
        <authorList>
            <person name="Dephoure N."/>
            <person name="Zhou C."/>
            <person name="Villen J."/>
            <person name="Beausoleil S.A."/>
            <person name="Bakalarski C.E."/>
            <person name="Elledge S.J."/>
            <person name="Gygi S.P."/>
        </authorList>
    </citation>
    <scope>PHOSPHORYLATION [LARGE SCALE ANALYSIS] AT SER-473; SER-752; SER-909; SER-919; SER-935 AND SER-1075</scope>
    <scope>IDENTIFICATION BY MASS SPECTROMETRY [LARGE SCALE ANALYSIS]</scope>
    <source>
        <tissue>Cervix carcinoma</tissue>
    </source>
</reference>
<reference key="12">
    <citation type="journal article" date="2009" name="Anal. Chem.">
        <title>Lys-N and trypsin cover complementary parts of the phosphoproteome in a refined SCX-based approach.</title>
        <authorList>
            <person name="Gauci S."/>
            <person name="Helbig A.O."/>
            <person name="Slijper M."/>
            <person name="Krijgsveld J."/>
            <person name="Heck A.J."/>
            <person name="Mohammed S."/>
        </authorList>
    </citation>
    <scope>IDENTIFICATION BY MASS SPECTROMETRY [LARGE SCALE ANALYSIS]</scope>
</reference>
<reference key="13">
    <citation type="journal article" date="2009" name="Mol. Cell. Proteomics">
        <title>Large-scale proteomics analysis of the human kinome.</title>
        <authorList>
            <person name="Oppermann F.S."/>
            <person name="Gnad F."/>
            <person name="Olsen J.V."/>
            <person name="Hornberger R."/>
            <person name="Greff Z."/>
            <person name="Keri G."/>
            <person name="Mann M."/>
            <person name="Daub H."/>
        </authorList>
    </citation>
    <scope>IDENTIFICATION BY MASS SPECTROMETRY [LARGE SCALE ANALYSIS]</scope>
</reference>
<reference key="14">
    <citation type="journal article" date="2009" name="Sci. Signal.">
        <title>Quantitative phosphoproteomic analysis of T cell receptor signaling reveals system-wide modulation of protein-protein interactions.</title>
        <authorList>
            <person name="Mayya V."/>
            <person name="Lundgren D.H."/>
            <person name="Hwang S.-I."/>
            <person name="Rezaul K."/>
            <person name="Wu L."/>
            <person name="Eng J.K."/>
            <person name="Rodionov V."/>
            <person name="Han D.K."/>
        </authorList>
    </citation>
    <scope>PHOSPHORYLATION [LARGE SCALE ANALYSIS] AT SER-473; SER-752; SER-852 AND SER-855</scope>
    <scope>IDENTIFICATION BY MASS SPECTROMETRY [LARGE SCALE ANALYSIS]</scope>
    <source>
        <tissue>Leukemic T-cell</tissue>
    </source>
</reference>
<reference key="15">
    <citation type="journal article" date="2009" name="Science">
        <title>Lysine acetylation targets protein complexes and co-regulates major cellular functions.</title>
        <authorList>
            <person name="Choudhary C."/>
            <person name="Kumar C."/>
            <person name="Gnad F."/>
            <person name="Nielsen M.L."/>
            <person name="Rehman M."/>
            <person name="Walther T.C."/>
            <person name="Olsen J.V."/>
            <person name="Mann M."/>
        </authorList>
    </citation>
    <scope>ACETYLATION [LARGE SCALE ANALYSIS] AT LYS-513 AND LYS-744</scope>
    <scope>IDENTIFICATION BY MASS SPECTROMETRY [LARGE SCALE ANALYSIS]</scope>
</reference>
<reference key="16">
    <citation type="journal article" date="2010" name="Sci. Signal.">
        <title>Quantitative phosphoproteomics reveals widespread full phosphorylation site occupancy during mitosis.</title>
        <authorList>
            <person name="Olsen J.V."/>
            <person name="Vermeulen M."/>
            <person name="Santamaria A."/>
            <person name="Kumar C."/>
            <person name="Miller M.L."/>
            <person name="Jensen L.J."/>
            <person name="Gnad F."/>
            <person name="Cox J."/>
            <person name="Jensen T.S."/>
            <person name="Nigg E.A."/>
            <person name="Brunak S."/>
            <person name="Mann M."/>
        </authorList>
    </citation>
    <scope>PHOSPHORYLATION [LARGE SCALE ANALYSIS] AT SER-720; SER-752 AND SER-1075</scope>
    <scope>IDENTIFICATION BY MASS SPECTROMETRY [LARGE SCALE ANALYSIS]</scope>
    <source>
        <tissue>Cervix carcinoma</tissue>
    </source>
</reference>
<reference key="17">
    <citation type="journal article" date="2011" name="BMC Syst. Biol.">
        <title>Initial characterization of the human central proteome.</title>
        <authorList>
            <person name="Burkard T.R."/>
            <person name="Planyavsky M."/>
            <person name="Kaupe I."/>
            <person name="Breitwieser F.P."/>
            <person name="Buerckstuemmer T."/>
            <person name="Bennett K.L."/>
            <person name="Superti-Furga G."/>
            <person name="Colinge J."/>
        </authorList>
    </citation>
    <scope>IDENTIFICATION BY MASS SPECTROMETRY [LARGE SCALE ANALYSIS]</scope>
</reference>
<reference key="18">
    <citation type="journal article" date="2011" name="Sci. Signal.">
        <title>System-wide temporal characterization of the proteome and phosphoproteome of human embryonic stem cell differentiation.</title>
        <authorList>
            <person name="Rigbolt K.T."/>
            <person name="Prokhorova T.A."/>
            <person name="Akimov V."/>
            <person name="Henningsen J."/>
            <person name="Johansen P.T."/>
            <person name="Kratchmarova I."/>
            <person name="Kassem M."/>
            <person name="Mann M."/>
            <person name="Olsen J.V."/>
            <person name="Blagoev B."/>
        </authorList>
    </citation>
    <scope>PHOSPHORYLATION [LARGE SCALE ANALYSIS] AT SER-473 AND SER-1075</scope>
    <scope>IDENTIFICATION BY MASS SPECTROMETRY [LARGE SCALE ANALYSIS]</scope>
</reference>
<reference key="19">
    <citation type="journal article" date="2013" name="J. Proteome Res.">
        <title>Toward a comprehensive characterization of a human cancer cell phosphoproteome.</title>
        <authorList>
            <person name="Zhou H."/>
            <person name="Di Palma S."/>
            <person name="Preisinger C."/>
            <person name="Peng M."/>
            <person name="Polat A.N."/>
            <person name="Heck A.J."/>
            <person name="Mohammed S."/>
        </authorList>
    </citation>
    <scope>PHOSPHORYLATION [LARGE SCALE ANALYSIS] AT SER-473; SER-580; SER-720; SER-752; SER-772; SER-812; SER-919; SER-935; SER-1006; SER-1075; SER-1087; SER-1098 AND THR-1100</scope>
    <scope>IDENTIFICATION BY MASS SPECTROMETRY [LARGE SCALE ANALYSIS]</scope>
    <source>
        <tissue>Cervix carcinoma</tissue>
        <tissue>Erythroleukemia</tissue>
    </source>
</reference>
<reference key="20">
    <citation type="journal article" date="2014" name="J. Proteomics">
        <title>An enzyme assisted RP-RPLC approach for in-depth analysis of human liver phosphoproteome.</title>
        <authorList>
            <person name="Bian Y."/>
            <person name="Song C."/>
            <person name="Cheng K."/>
            <person name="Dong M."/>
            <person name="Wang F."/>
            <person name="Huang J."/>
            <person name="Sun D."/>
            <person name="Wang L."/>
            <person name="Ye M."/>
            <person name="Zou H."/>
        </authorList>
    </citation>
    <scope>IDENTIFICATION BY MASS SPECTROMETRY [LARGE SCALE ANALYSIS]</scope>
    <source>
        <tissue>Liver</tissue>
    </source>
</reference>
<reference key="21">
    <citation type="journal article" date="2018" name="Mol. Psychiatry">
        <title>Mapping autosomal recessive intellectual disability: combined microarray and exome sequencing identifies 26 novel candidate genes in 192 consanguineous families.</title>
        <authorList>
            <person name="Harripaul R."/>
            <person name="Vasli N."/>
            <person name="Mikhailov A."/>
            <person name="Rafiq M.A."/>
            <person name="Mittal K."/>
            <person name="Windpassinger C."/>
            <person name="Sheikh T.I."/>
            <person name="Noor A."/>
            <person name="Mahmood H."/>
            <person name="Downey S."/>
            <person name="Johnson M."/>
            <person name="Vleuten K."/>
            <person name="Bell L."/>
            <person name="Ilyas M."/>
            <person name="Khan F.S."/>
            <person name="Khan V."/>
            <person name="Moradi M."/>
            <person name="Ayaz M."/>
            <person name="Naeem F."/>
            <person name="Heidari A."/>
            <person name="Ahmed I."/>
            <person name="Ghadami S."/>
            <person name="Agha Z."/>
            <person name="Zeinali S."/>
            <person name="Qamar R."/>
            <person name="Mozhdehipanah H."/>
            <person name="John P."/>
            <person name="Mir A."/>
            <person name="Ansar M."/>
            <person name="French L."/>
            <person name="Ayub M."/>
            <person name="Vincent J.B."/>
        </authorList>
    </citation>
    <scope>VARIANT HIS-1183</scope>
</reference>
<accession>Q9UMZ2</accession>
<accession>A8MWU4</accession>
<accession>B7ZKZ2</accession>
<accession>B7ZKZ3</accession>
<accession>Q17RI2</accession>
<accession>Q5BKU5</accession>
<accession>Q6ZT17</accession>
<feature type="chain" id="PRO_0000072387" description="Synergin gamma">
    <location>
        <begin position="1"/>
        <end position="1314"/>
    </location>
</feature>
<feature type="domain" description="EH" evidence="3">
    <location>
        <begin position="295"/>
        <end position="388"/>
    </location>
</feature>
<feature type="region of interest" description="Disordered" evidence="4">
    <location>
        <begin position="178"/>
        <end position="199"/>
    </location>
</feature>
<feature type="region of interest" description="Disordered" evidence="4">
    <location>
        <begin position="460"/>
        <end position="498"/>
    </location>
</feature>
<feature type="region of interest" description="Interaction with AP1G1" evidence="5">
    <location>
        <begin position="518"/>
        <end position="786"/>
    </location>
</feature>
<feature type="region of interest" description="Interaction with AP1G1, AP1G2 and GGA1" evidence="8">
    <location>
        <begin position="666"/>
        <end position="678"/>
    </location>
</feature>
<feature type="region of interest" description="Disordered" evidence="4">
    <location>
        <begin position="972"/>
        <end position="1026"/>
    </location>
</feature>
<feature type="region of interest" description="Disordered" evidence="4">
    <location>
        <begin position="1073"/>
        <end position="1102"/>
    </location>
</feature>
<feature type="coiled-coil region" evidence="2">
    <location>
        <begin position="115"/>
        <end position="155"/>
    </location>
</feature>
<feature type="short sequence motif" description="DFXDF motif 1">
    <location>
        <begin position="457"/>
        <end position="461"/>
    </location>
</feature>
<feature type="short sequence motif" description="DFXDF motif 2">
    <location>
        <begin position="690"/>
        <end position="694"/>
    </location>
</feature>
<feature type="short sequence motif" description="DFXDF motif 3">
    <location>
        <begin position="775"/>
        <end position="779"/>
    </location>
</feature>
<feature type="compositionally biased region" description="Polar residues" evidence="4">
    <location>
        <begin position="462"/>
        <end position="496"/>
    </location>
</feature>
<feature type="compositionally biased region" description="Basic and acidic residues" evidence="4">
    <location>
        <begin position="976"/>
        <end position="990"/>
    </location>
</feature>
<feature type="compositionally biased region" description="Polar residues" evidence="4">
    <location>
        <begin position="1001"/>
        <end position="1019"/>
    </location>
</feature>
<feature type="modified residue" description="Phosphoserine" evidence="16 19 21 22">
    <location>
        <position position="473"/>
    </location>
</feature>
<feature type="modified residue" description="N6-acetyllysine" evidence="18">
    <location>
        <position position="513"/>
    </location>
</feature>
<feature type="modified residue" description="Phosphoserine" evidence="22">
    <location>
        <position position="580"/>
    </location>
</feature>
<feature type="modified residue" description="Phosphoserine" evidence="20 22">
    <location>
        <position position="720"/>
    </location>
</feature>
<feature type="modified residue" description="N6-acetyllysine" evidence="18">
    <location>
        <position position="744"/>
    </location>
</feature>
<feature type="modified residue" description="Phosphoserine" evidence="16 17 19 20 22">
    <location>
        <position position="752"/>
    </location>
</feature>
<feature type="modified residue" description="Phosphoserine" evidence="22">
    <location>
        <position position="772"/>
    </location>
</feature>
<feature type="modified residue" description="Phosphoserine" evidence="22">
    <location>
        <position position="812"/>
    </location>
</feature>
<feature type="modified residue" description="Phosphoserine" evidence="19">
    <location>
        <position position="852"/>
    </location>
</feature>
<feature type="modified residue" description="Phosphoserine" evidence="19">
    <location>
        <position position="855"/>
    </location>
</feature>
<feature type="modified residue" description="Phosphoserine" evidence="16">
    <location>
        <position position="909"/>
    </location>
</feature>
<feature type="modified residue" description="Phosphoserine" evidence="16 22">
    <location>
        <position position="919"/>
    </location>
</feature>
<feature type="modified residue" description="Phosphoserine" evidence="16 22">
    <location>
        <position position="935"/>
    </location>
</feature>
<feature type="modified residue" description="Phosphoserine" evidence="22">
    <location>
        <position position="1006"/>
    </location>
</feature>
<feature type="modified residue" description="Phosphoserine" evidence="1">
    <location>
        <position position="1073"/>
    </location>
</feature>
<feature type="modified residue" description="Phosphoserine" evidence="16 20 21 22">
    <location>
        <position position="1075"/>
    </location>
</feature>
<feature type="modified residue" description="Phosphoserine" evidence="22">
    <location>
        <position position="1087"/>
    </location>
</feature>
<feature type="modified residue" description="Phosphoserine" evidence="22">
    <location>
        <position position="1098"/>
    </location>
</feature>
<feature type="modified residue" description="Phosphothreonine" evidence="22">
    <location>
        <position position="1100"/>
    </location>
</feature>
<feature type="splice variant" id="VSP_054732" description="In isoform 7." evidence="11">
    <location>
        <position position="40"/>
    </location>
</feature>
<feature type="splice variant" id="VSP_023015" description="In isoform 2, isoform 3, isoform 5, isoform 6, isoform 7 and isoform 8." evidence="11">
    <location>
        <begin position="198"/>
        <end position="275"/>
    </location>
</feature>
<feature type="splice variant" id="VSP_043281" description="In isoform 5." evidence="11">
    <location>
        <begin position="366"/>
        <end position="448"/>
    </location>
</feature>
<feature type="splice variant" id="VSP_043282" description="In isoform 5 and isoform 8." evidence="11">
    <location>
        <begin position="870"/>
        <end position="914"/>
    </location>
</feature>
<feature type="splice variant" id="VSP_054733" description="In isoform 6." evidence="13">
    <original>T</original>
    <variation>TCCWEKMTVITKHLSPYHELLEEK</variation>
    <location>
        <position position="1222"/>
    </location>
</feature>
<feature type="splice variant" id="VSP_023016" description="In isoform 3, isoform 4 and isoform 8." evidence="11">
    <location>
        <begin position="1260"/>
        <end position="1271"/>
    </location>
</feature>
<feature type="sequence variant" id="VAR_051395" description="In dbSNP:rs12944821.">
    <original>A</original>
    <variation>G</variation>
    <location>
        <position position="40"/>
    </location>
</feature>
<feature type="sequence variant" id="VAR_051396" description="In dbSNP:rs12602536.">
    <original>T</original>
    <variation>A</variation>
    <location>
        <position position="222"/>
    </location>
</feature>
<feature type="sequence variant" id="VAR_080768" description="Found in a consanguineous family with intellectual disability; uncertain significance; dbSNP:rs370465279." evidence="10">
    <original>R</original>
    <variation>H</variation>
    <location>
        <position position="1183"/>
    </location>
</feature>
<feature type="sequence conflict" description="In Ref. 4; AK126988." evidence="13" ref="4">
    <original>S</original>
    <variation>P</variation>
    <location>
        <position position="213"/>
    </location>
</feature>
<feature type="sequence conflict" description="In Ref. 4; AK126988." evidence="13" ref="4">
    <original>K</original>
    <variation>R</variation>
    <location>
        <position position="349"/>
    </location>
</feature>
<feature type="sequence conflict" description="In Ref. 1; AAD49732." evidence="13" ref="1">
    <original>E</original>
    <variation>K</variation>
    <location>
        <position position="1123"/>
    </location>
</feature>
<feature type="strand" evidence="23">
    <location>
        <begin position="284"/>
        <end position="286"/>
    </location>
</feature>
<feature type="helix" evidence="23">
    <location>
        <begin position="291"/>
        <end position="294"/>
    </location>
</feature>
<feature type="helix" evidence="23">
    <location>
        <begin position="301"/>
        <end position="309"/>
    </location>
</feature>
<feature type="helix" evidence="23">
    <location>
        <begin position="318"/>
        <end position="327"/>
    </location>
</feature>
<feature type="helix" evidence="23">
    <location>
        <begin position="332"/>
        <end position="340"/>
    </location>
</feature>
<feature type="helix" evidence="23">
    <location>
        <begin position="352"/>
        <end position="366"/>
    </location>
</feature>
<feature type="helix" evidence="23">
    <location>
        <begin position="374"/>
        <end position="378"/>
    </location>
</feature>
<proteinExistence type="evidence at protein level"/>
<comment type="function">
    <text evidence="9 14">Plays a role in endocytosis and/or membrane trafficking at the trans-Golgi network (TGN) (PubMed:15758025). May act by linking the adapter protein complex AP-1 to other proteins (Probable). Component of clathrin-coated vesicles (PubMed:15758025). Component of the aftiphilin/p200/gamma-synergin complex, which plays roles in AP1G1/AP-1-mediated protein trafficking including the trafficking of transferrin from early to recycling endosomes, and the membrane trafficking of furin and the lysosomal enzyme cathepsin D between the trans-Golgi network (TGN) and endosomes (PubMed:15758025).</text>
</comment>
<comment type="subunit">
    <text evidence="1 5 6 7 8 9">Self-associates (PubMed:15758025). Interacts with GGA1 (via GAE domain) (PubMed:10814529, PubMed:14665628, PubMed:15758025). Interacts with GGA2 and GGA3 (PubMed:10814529). Interacts with AP1G1 (via GAE domain), a subunit of adapter protein complex AP-1 (PubMed:10477754, PubMed:10814529, PubMed:12538641, PubMed:14665628). Interacts with AP1G2 (via GAE domain) a subunit of adapter protein complex AP-1 (PubMed:10814529, PubMed:14665628). Component of the aftiphilin/p200/gamma-synergin complex, at least composed of AFTPH/aftiphilin, HEATR5B/p200a and SYNRG/gamma-synergin, which plays a role in the AP1G1/AP-1-mediated trafficking of transferrin from early to recycling endosomes (PubMed:15758025). Within the complex interacts with AFTPH/aftiphilin and HEATR5B/p200a; the interactions are direct (PubMed:15758025). Interacts (via EH domain) with SCAMP1 (By similarity).</text>
</comment>
<comment type="interaction">
    <interactant intactId="EBI-7240490">
        <id>Q9UMZ2</id>
    </interactant>
    <interactant intactId="EBI-2848714">
        <id>Q6ULP2</id>
        <label>AFTPH</label>
    </interactant>
    <organismsDiffer>false</organismsDiffer>
    <experiments>2</experiments>
</comment>
<comment type="interaction">
    <interactant intactId="EBI-7240490">
        <id>Q9UMZ2</id>
    </interactant>
    <interactant intactId="EBI-743771">
        <id>Q92624</id>
        <label>APPBP2</label>
    </interactant>
    <organismsDiffer>false</organismsDiffer>
    <experiments>3</experiments>
</comment>
<comment type="interaction">
    <interactant intactId="EBI-12353261">
        <id>Q9UMZ2-8</id>
    </interactant>
    <interactant intactId="EBI-743771">
        <id>Q92624</id>
        <label>APPBP2</label>
    </interactant>
    <organismsDiffer>false</organismsDiffer>
    <experiments>3</experiments>
</comment>
<comment type="subcellular location">
    <subcellularLocation>
        <location evidence="1">Cytoplasm</location>
    </subcellularLocation>
    <subcellularLocation>
        <location evidence="1">Golgi apparatus</location>
        <location evidence="1">trans-Golgi network membrane</location>
        <topology evidence="1">Peripheral membrane protein</topology>
    </subcellularLocation>
    <subcellularLocation>
        <location evidence="9">Cytoplasm</location>
        <location evidence="9">Perinuclear region</location>
    </subcellularLocation>
    <subcellularLocation>
        <location evidence="9">Cytoplasmic vesicle</location>
        <location evidence="9">Clathrin-coated vesicle</location>
    </subcellularLocation>
    <text evidence="1 9">Localization at clathrin-coated vesicles depends on AFTPH/aftiphilin (PubMed:15758025). Associates with membranes via the adapter protein complex AP-1 (By similarity). Colocalizes with AP1G1 (By similarity).</text>
</comment>
<comment type="alternative products">
    <event type="alternative splicing"/>
    <isoform>
        <id>Q9UMZ2-1</id>
        <name>1</name>
        <sequence type="displayed"/>
    </isoform>
    <isoform>
        <id>Q9UMZ2-3</id>
        <name>2</name>
        <sequence type="described" ref="VSP_023015"/>
    </isoform>
    <isoform>
        <id>Q9UMZ2-4</id>
        <name>3</name>
        <sequence type="described" ref="VSP_023015 VSP_023016"/>
    </isoform>
    <isoform>
        <id>Q9UMZ2-5</id>
        <name>4</name>
        <sequence type="described" ref="VSP_023016"/>
    </isoform>
    <isoform>
        <id>Q9UMZ2-6</id>
        <name>5</name>
        <sequence type="described" ref="VSP_023015 VSP_043281 VSP_043282"/>
    </isoform>
    <isoform>
        <id>Q9UMZ2-7</id>
        <name>6</name>
        <sequence type="described" ref="VSP_023015 VSP_054733"/>
    </isoform>
    <isoform>
        <id>Q9UMZ2-8</id>
        <name>7</name>
        <sequence type="described" ref="VSP_054732 VSP_023015"/>
    </isoform>
    <isoform>
        <id>Q9UMZ2-9</id>
        <name>8</name>
        <sequence type="described" ref="VSP_023015 VSP_043282 VSP_023016"/>
    </isoform>
</comment>
<comment type="domain">
    <text evidence="7">The DFXDF motifs mediate the interaction with gamma-appendage subunits AP1G1 and AP1G2.</text>
</comment>
<comment type="sequence caution" evidence="13">
    <conflict type="miscellaneous discrepancy">
        <sequence resource="EMBL" id="AK126988"/>
    </conflict>
    <text>Intron retention.</text>
</comment>
<name>SYNRG_HUMAN</name>